<sequence>MATYALSQAHREQMEKSLVDSDPEIAQIMEKEIQRQRESILLIASENVTSRAVFDALGSPMSNKYSEGYPGARYYGGNQHIDAIELTCQARALKAFNLDPEKWGVNVQCLSGSPANLEVYQALMRPHDRLMGLDLPHGGHLSHGYQTPSRKISAVSTYFETFPYRVNTETGIIDYDTLEANAELYRPKCLVAGTSAYCRLIDYGRMRKIADKVGAYLIVDMAHISGLVAAGVIPSPFEYADVVTTTTHKSLRGPRGAMIFFRKGVRSTDPKTGKEIMYDLEGPINFSVFPGHQGGPHNHTITALAVALKQAATPEFRQYQEQVLKNAKALEVEFKALGHKLVSDGTDSHMVLLDLRPKGLDGARVEAVLEQINIACNKNSIPGDKSALTPCGIRIGTPAMTSRGMSEEDFKRVARYIDQVINLCKSIQADLPKEANKLKDFKAKVASGSVPEILALRKEVAEWASTYPLPV</sequence>
<feature type="chain" id="PRO_0000462197" description="Serine hydroxymethyltransferase, cytosolic">
    <location>
        <begin position="1"/>
        <end position="471"/>
    </location>
</feature>
<feature type="modified residue" description="N6-(pyridoxal phosphate)lysine" evidence="1">
    <location>
        <position position="249"/>
    </location>
</feature>
<gene>
    <name evidence="3" type="primary">shmB</name>
    <name type="ORF">AFUA_3G09320</name>
</gene>
<comment type="function">
    <text evidence="1 2">Catalyzes the interconversion of serine and glycine (By similarity). Essential for viability and required for virulence in a murine model of established pulmonary infection (PubMed:39825596).</text>
</comment>
<comment type="catalytic activity">
    <reaction evidence="1">
        <text>(6R)-5,10-methylene-5,6,7,8-tetrahydrofolate + glycine + H2O = (6S)-5,6,7,8-tetrahydrofolate + L-serine</text>
        <dbReference type="Rhea" id="RHEA:15481"/>
        <dbReference type="ChEBI" id="CHEBI:15377"/>
        <dbReference type="ChEBI" id="CHEBI:15636"/>
        <dbReference type="ChEBI" id="CHEBI:33384"/>
        <dbReference type="ChEBI" id="CHEBI:57305"/>
        <dbReference type="ChEBI" id="CHEBI:57453"/>
        <dbReference type="EC" id="2.1.2.1"/>
    </reaction>
</comment>
<comment type="cofactor">
    <cofactor evidence="1">
        <name>pyridoxal 5'-phosphate</name>
        <dbReference type="ChEBI" id="CHEBI:597326"/>
    </cofactor>
</comment>
<comment type="pathway">
    <text evidence="1">One-carbon metabolism; tetrahydrofolate interconversion.</text>
</comment>
<comment type="subcellular location">
    <subcellularLocation>
        <location evidence="2">Cytoplasm</location>
        <location evidence="2">Cytosol</location>
    </subcellularLocation>
</comment>
<comment type="induction">
    <text evidence="2">Consistently expressed at higher levels in vivo (intrapulmonary growth) than in vitro.</text>
</comment>
<comment type="disruption phenotype">
    <text evidence="2">Leads to lethality.</text>
</comment>
<comment type="biotechnology">
    <text evidence="2">As it is possible to design specific inhibitors, shmB is a promising antifungal target for future studies.</text>
</comment>
<comment type="miscellaneous">
    <text evidence="4">In eukaryotes there are two forms of the enzymes: a cytosolic one and a mitochondrial one.</text>
</comment>
<comment type="similarity">
    <text evidence="4">Belongs to the SHMT family.</text>
</comment>
<dbReference type="EC" id="2.1.2.1" evidence="1"/>
<dbReference type="EMBL" id="AAHF01000002">
    <property type="protein sequence ID" value="EAL92649.1"/>
    <property type="molecule type" value="Genomic_DNA"/>
</dbReference>
<dbReference type="RefSeq" id="XP_754687.1">
    <property type="nucleotide sequence ID" value="XM_749594.1"/>
</dbReference>
<dbReference type="FunCoup" id="Q4WXF4">
    <property type="interactions" value="873"/>
</dbReference>
<dbReference type="STRING" id="330879.Q4WXF4"/>
<dbReference type="SwissPalm" id="Q4WXF4"/>
<dbReference type="EnsemblFungi" id="EAL92649">
    <property type="protein sequence ID" value="EAL92649"/>
    <property type="gene ID" value="AFUA_3G09320"/>
</dbReference>
<dbReference type="GeneID" id="3511838"/>
<dbReference type="KEGG" id="afm:AFUA_3G09320"/>
<dbReference type="VEuPathDB" id="FungiDB:Afu3g09320"/>
<dbReference type="eggNOG" id="KOG2467">
    <property type="taxonomic scope" value="Eukaryota"/>
</dbReference>
<dbReference type="HOGENOM" id="CLU_022477_0_0_1"/>
<dbReference type="InParanoid" id="Q4WXF4"/>
<dbReference type="OMA" id="CQFANVQ"/>
<dbReference type="OrthoDB" id="10265628at2759"/>
<dbReference type="UniPathway" id="UPA00193"/>
<dbReference type="Proteomes" id="UP000002530">
    <property type="component" value="Chromosome 3"/>
</dbReference>
<dbReference type="GO" id="GO:0005737">
    <property type="term" value="C:cytoplasm"/>
    <property type="evidence" value="ECO:0000318"/>
    <property type="project" value="GO_Central"/>
</dbReference>
<dbReference type="GO" id="GO:0005739">
    <property type="term" value="C:mitochondrion"/>
    <property type="evidence" value="ECO:0000318"/>
    <property type="project" value="GO_Central"/>
</dbReference>
<dbReference type="GO" id="GO:0004372">
    <property type="term" value="F:glycine hydroxymethyltransferase activity"/>
    <property type="evidence" value="ECO:0000318"/>
    <property type="project" value="GO_Central"/>
</dbReference>
<dbReference type="GO" id="GO:0030170">
    <property type="term" value="F:pyridoxal phosphate binding"/>
    <property type="evidence" value="ECO:0000318"/>
    <property type="project" value="GO_Central"/>
</dbReference>
<dbReference type="GO" id="GO:0019264">
    <property type="term" value="P:glycine biosynthetic process from serine"/>
    <property type="evidence" value="ECO:0000318"/>
    <property type="project" value="GO_Central"/>
</dbReference>
<dbReference type="GO" id="GO:0035999">
    <property type="term" value="P:tetrahydrofolate interconversion"/>
    <property type="evidence" value="ECO:0007669"/>
    <property type="project" value="UniProtKB-UniPathway"/>
</dbReference>
<dbReference type="GO" id="GO:0046653">
    <property type="term" value="P:tetrahydrofolate metabolic process"/>
    <property type="evidence" value="ECO:0000318"/>
    <property type="project" value="GO_Central"/>
</dbReference>
<dbReference type="CDD" id="cd00378">
    <property type="entry name" value="SHMT"/>
    <property type="match status" value="1"/>
</dbReference>
<dbReference type="FunFam" id="3.40.640.10:FF:000097">
    <property type="entry name" value="Serine hydroxymethyltransferase"/>
    <property type="match status" value="1"/>
</dbReference>
<dbReference type="Gene3D" id="3.90.1150.10">
    <property type="entry name" value="Aspartate Aminotransferase, domain 1"/>
    <property type="match status" value="1"/>
</dbReference>
<dbReference type="Gene3D" id="3.40.640.10">
    <property type="entry name" value="Type I PLP-dependent aspartate aminotransferase-like (Major domain)"/>
    <property type="match status" value="1"/>
</dbReference>
<dbReference type="HAMAP" id="MF_00051">
    <property type="entry name" value="SHMT"/>
    <property type="match status" value="1"/>
</dbReference>
<dbReference type="InterPro" id="IPR015424">
    <property type="entry name" value="PyrdxlP-dep_Trfase"/>
</dbReference>
<dbReference type="InterPro" id="IPR015421">
    <property type="entry name" value="PyrdxlP-dep_Trfase_major"/>
</dbReference>
<dbReference type="InterPro" id="IPR015422">
    <property type="entry name" value="PyrdxlP-dep_Trfase_small"/>
</dbReference>
<dbReference type="InterPro" id="IPR001085">
    <property type="entry name" value="Ser_HO-MeTrfase"/>
</dbReference>
<dbReference type="InterPro" id="IPR049943">
    <property type="entry name" value="Ser_HO-MeTrfase-like"/>
</dbReference>
<dbReference type="InterPro" id="IPR019798">
    <property type="entry name" value="Ser_HO-MeTrfase_PLP_BS"/>
</dbReference>
<dbReference type="InterPro" id="IPR039429">
    <property type="entry name" value="SHMT-like_dom"/>
</dbReference>
<dbReference type="NCBIfam" id="NF000586">
    <property type="entry name" value="PRK00011.1"/>
    <property type="match status" value="1"/>
</dbReference>
<dbReference type="PANTHER" id="PTHR11680">
    <property type="entry name" value="SERINE HYDROXYMETHYLTRANSFERASE"/>
    <property type="match status" value="1"/>
</dbReference>
<dbReference type="PANTHER" id="PTHR11680:SF28">
    <property type="entry name" value="SERINE HYDROXYMETHYLTRANSFERASE, MITOCHONDRIAL"/>
    <property type="match status" value="1"/>
</dbReference>
<dbReference type="Pfam" id="PF00464">
    <property type="entry name" value="SHMT"/>
    <property type="match status" value="1"/>
</dbReference>
<dbReference type="PIRSF" id="PIRSF000412">
    <property type="entry name" value="SHMT"/>
    <property type="match status" value="1"/>
</dbReference>
<dbReference type="SUPFAM" id="SSF53383">
    <property type="entry name" value="PLP-dependent transferases"/>
    <property type="match status" value="1"/>
</dbReference>
<dbReference type="PROSITE" id="PS00096">
    <property type="entry name" value="SHMT"/>
    <property type="match status" value="1"/>
</dbReference>
<protein>
    <recommendedName>
        <fullName evidence="3">Serine hydroxymethyltransferase, cytosolic</fullName>
        <ecNumber evidence="1">2.1.2.1</ecNumber>
    </recommendedName>
</protein>
<keyword id="KW-0963">Cytoplasm</keyword>
<keyword id="KW-0554">One-carbon metabolism</keyword>
<keyword id="KW-0663">Pyridoxal phosphate</keyword>
<keyword id="KW-1185">Reference proteome</keyword>
<keyword id="KW-0808">Transferase</keyword>
<keyword id="KW-0843">Virulence</keyword>
<accession>Q4WXF4</accession>
<reference key="1">
    <citation type="journal article" date="2005" name="Nature">
        <title>Genomic sequence of the pathogenic and allergenic filamentous fungus Aspergillus fumigatus.</title>
        <authorList>
            <person name="Nierman W.C."/>
            <person name="Pain A."/>
            <person name="Anderson M.J."/>
            <person name="Wortman J.R."/>
            <person name="Kim H.S."/>
            <person name="Arroyo J."/>
            <person name="Berriman M."/>
            <person name="Abe K."/>
            <person name="Archer D.B."/>
            <person name="Bermejo C."/>
            <person name="Bennett J.W."/>
            <person name="Bowyer P."/>
            <person name="Chen D."/>
            <person name="Collins M."/>
            <person name="Coulsen R."/>
            <person name="Davies R."/>
            <person name="Dyer P.S."/>
            <person name="Farman M.L."/>
            <person name="Fedorova N."/>
            <person name="Fedorova N.D."/>
            <person name="Feldblyum T.V."/>
            <person name="Fischer R."/>
            <person name="Fosker N."/>
            <person name="Fraser A."/>
            <person name="Garcia J.L."/>
            <person name="Garcia M.J."/>
            <person name="Goble A."/>
            <person name="Goldman G.H."/>
            <person name="Gomi K."/>
            <person name="Griffith-Jones S."/>
            <person name="Gwilliam R."/>
            <person name="Haas B.J."/>
            <person name="Haas H."/>
            <person name="Harris D.E."/>
            <person name="Horiuchi H."/>
            <person name="Huang J."/>
            <person name="Humphray S."/>
            <person name="Jimenez J."/>
            <person name="Keller N."/>
            <person name="Khouri H."/>
            <person name="Kitamoto K."/>
            <person name="Kobayashi T."/>
            <person name="Konzack S."/>
            <person name="Kulkarni R."/>
            <person name="Kumagai T."/>
            <person name="Lafton A."/>
            <person name="Latge J.-P."/>
            <person name="Li W."/>
            <person name="Lord A."/>
            <person name="Lu C."/>
            <person name="Majoros W.H."/>
            <person name="May G.S."/>
            <person name="Miller B.L."/>
            <person name="Mohamoud Y."/>
            <person name="Molina M."/>
            <person name="Monod M."/>
            <person name="Mouyna I."/>
            <person name="Mulligan S."/>
            <person name="Murphy L.D."/>
            <person name="O'Neil S."/>
            <person name="Paulsen I."/>
            <person name="Penalva M.A."/>
            <person name="Pertea M."/>
            <person name="Price C."/>
            <person name="Pritchard B.L."/>
            <person name="Quail M.A."/>
            <person name="Rabbinowitsch E."/>
            <person name="Rawlins N."/>
            <person name="Rajandream M.A."/>
            <person name="Reichard U."/>
            <person name="Renauld H."/>
            <person name="Robson G.D."/>
            <person name="Rodriguez de Cordoba S."/>
            <person name="Rodriguez-Pena J.M."/>
            <person name="Ronning C.M."/>
            <person name="Rutter S."/>
            <person name="Salzberg S.L."/>
            <person name="Sanchez M."/>
            <person name="Sanchez-Ferrero J.C."/>
            <person name="Saunders D."/>
            <person name="Seeger K."/>
            <person name="Squares R."/>
            <person name="Squares S."/>
            <person name="Takeuchi M."/>
            <person name="Tekaia F."/>
            <person name="Turner G."/>
            <person name="Vazquez de Aldana C.R."/>
            <person name="Weidman J."/>
            <person name="White O."/>
            <person name="Woodward J.R."/>
            <person name="Yu J.-H."/>
            <person name="Fraser C.M."/>
            <person name="Galagan J.E."/>
            <person name="Asai K."/>
            <person name="Machida M."/>
            <person name="Hall N."/>
            <person name="Barrell B.G."/>
            <person name="Denning D.W."/>
        </authorList>
    </citation>
    <scope>NUCLEOTIDE SEQUENCE [LARGE SCALE GENOMIC DNA]</scope>
    <source>
        <strain>ATCC MYA-4609 / CBS 101355 / FGSC A1100 / Af293</strain>
    </source>
</reference>
<reference key="2">
    <citation type="journal article" date="2025" name="Virulence">
        <title>The sulfur-related metabolic status of Aspergillus fumigatus during infection reveals cytosolic serine hydroxymethyltransferase as a promising antifungal target.</title>
        <authorList>
            <person name="Alharthi R."/>
            <person name="Sueiro-Olivares M."/>
            <person name="Storer I."/>
            <person name="Bin Shuraym H."/>
            <person name="Scott J."/>
            <person name="Al-Shidhani R."/>
            <person name="Fortune-Grant R."/>
            <person name="Bignell E."/>
            <person name="Tabernero L."/>
            <person name="Bromley M."/>
            <person name="Zhao C."/>
            <person name="Amich J."/>
        </authorList>
    </citation>
    <scope>FUNCTION</scope>
    <scope>SUBCELLULAR LOCATION</scope>
    <scope>INDUCTION</scope>
    <scope>DISRUPTION PHENOTYPE</scope>
    <scope>BIOTECHNOLOGY</scope>
</reference>
<name>GLYC_ASPFU</name>
<organism>
    <name type="scientific">Aspergillus fumigatus (strain ATCC MYA-4609 / CBS 101355 / FGSC A1100 / Af293)</name>
    <name type="common">Neosartorya fumigata</name>
    <dbReference type="NCBI Taxonomy" id="330879"/>
    <lineage>
        <taxon>Eukaryota</taxon>
        <taxon>Fungi</taxon>
        <taxon>Dikarya</taxon>
        <taxon>Ascomycota</taxon>
        <taxon>Pezizomycotina</taxon>
        <taxon>Eurotiomycetes</taxon>
        <taxon>Eurotiomycetidae</taxon>
        <taxon>Eurotiales</taxon>
        <taxon>Aspergillaceae</taxon>
        <taxon>Aspergillus</taxon>
        <taxon>Aspergillus subgen. Fumigati</taxon>
    </lineage>
</organism>
<proteinExistence type="evidence at protein level"/>
<evidence type="ECO:0000250" key="1">
    <source>
        <dbReference type="UniProtKB" id="P34896"/>
    </source>
</evidence>
<evidence type="ECO:0000269" key="2">
    <source>
    </source>
</evidence>
<evidence type="ECO:0000303" key="3">
    <source>
    </source>
</evidence>
<evidence type="ECO:0000305" key="4"/>